<organism>
    <name type="scientific">Escherichia coli O45:K1 (strain S88 / ExPEC)</name>
    <dbReference type="NCBI Taxonomy" id="585035"/>
    <lineage>
        <taxon>Bacteria</taxon>
        <taxon>Pseudomonadati</taxon>
        <taxon>Pseudomonadota</taxon>
        <taxon>Gammaproteobacteria</taxon>
        <taxon>Enterobacterales</taxon>
        <taxon>Enterobacteriaceae</taxon>
        <taxon>Escherichia</taxon>
    </lineage>
</organism>
<name>APT_ECO45</name>
<accession>B7MDZ1</accession>
<dbReference type="EC" id="2.4.2.7" evidence="1"/>
<dbReference type="EMBL" id="CU928161">
    <property type="protein sequence ID" value="CAR01813.1"/>
    <property type="molecule type" value="Genomic_DNA"/>
</dbReference>
<dbReference type="RefSeq" id="WP_000127356.1">
    <property type="nucleotide sequence ID" value="NC_011742.1"/>
</dbReference>
<dbReference type="SMR" id="B7MDZ1"/>
<dbReference type="GeneID" id="93776981"/>
<dbReference type="KEGG" id="ecz:ECS88_0466"/>
<dbReference type="HOGENOM" id="CLU_063339_3_0_6"/>
<dbReference type="UniPathway" id="UPA00588">
    <property type="reaction ID" value="UER00646"/>
</dbReference>
<dbReference type="Proteomes" id="UP000000747">
    <property type="component" value="Chromosome"/>
</dbReference>
<dbReference type="GO" id="GO:0005737">
    <property type="term" value="C:cytoplasm"/>
    <property type="evidence" value="ECO:0007669"/>
    <property type="project" value="UniProtKB-SubCell"/>
</dbReference>
<dbReference type="GO" id="GO:0002055">
    <property type="term" value="F:adenine binding"/>
    <property type="evidence" value="ECO:0007669"/>
    <property type="project" value="TreeGrafter"/>
</dbReference>
<dbReference type="GO" id="GO:0003999">
    <property type="term" value="F:adenine phosphoribosyltransferase activity"/>
    <property type="evidence" value="ECO:0007669"/>
    <property type="project" value="UniProtKB-UniRule"/>
</dbReference>
<dbReference type="GO" id="GO:0016208">
    <property type="term" value="F:AMP binding"/>
    <property type="evidence" value="ECO:0007669"/>
    <property type="project" value="TreeGrafter"/>
</dbReference>
<dbReference type="GO" id="GO:0006168">
    <property type="term" value="P:adenine salvage"/>
    <property type="evidence" value="ECO:0007669"/>
    <property type="project" value="InterPro"/>
</dbReference>
<dbReference type="GO" id="GO:0044209">
    <property type="term" value="P:AMP salvage"/>
    <property type="evidence" value="ECO:0007669"/>
    <property type="project" value="UniProtKB-UniRule"/>
</dbReference>
<dbReference type="GO" id="GO:0006166">
    <property type="term" value="P:purine ribonucleoside salvage"/>
    <property type="evidence" value="ECO:0007669"/>
    <property type="project" value="UniProtKB-KW"/>
</dbReference>
<dbReference type="CDD" id="cd06223">
    <property type="entry name" value="PRTases_typeI"/>
    <property type="match status" value="1"/>
</dbReference>
<dbReference type="FunFam" id="3.40.50.2020:FF:000004">
    <property type="entry name" value="Adenine phosphoribosyltransferase"/>
    <property type="match status" value="1"/>
</dbReference>
<dbReference type="Gene3D" id="3.40.50.2020">
    <property type="match status" value="1"/>
</dbReference>
<dbReference type="HAMAP" id="MF_00004">
    <property type="entry name" value="Aden_phosphoribosyltr"/>
    <property type="match status" value="1"/>
</dbReference>
<dbReference type="InterPro" id="IPR005764">
    <property type="entry name" value="Ade_phspho_trans"/>
</dbReference>
<dbReference type="InterPro" id="IPR000836">
    <property type="entry name" value="PRibTrfase_dom"/>
</dbReference>
<dbReference type="InterPro" id="IPR029057">
    <property type="entry name" value="PRTase-like"/>
</dbReference>
<dbReference type="InterPro" id="IPR050054">
    <property type="entry name" value="UPRTase/APRTase"/>
</dbReference>
<dbReference type="NCBIfam" id="TIGR01090">
    <property type="entry name" value="apt"/>
    <property type="match status" value="1"/>
</dbReference>
<dbReference type="NCBIfam" id="NF002632">
    <property type="entry name" value="PRK02304.1-1"/>
    <property type="match status" value="1"/>
</dbReference>
<dbReference type="NCBIfam" id="NF002633">
    <property type="entry name" value="PRK02304.1-2"/>
    <property type="match status" value="1"/>
</dbReference>
<dbReference type="NCBIfam" id="NF002634">
    <property type="entry name" value="PRK02304.1-3"/>
    <property type="match status" value="1"/>
</dbReference>
<dbReference type="NCBIfam" id="NF002636">
    <property type="entry name" value="PRK02304.1-5"/>
    <property type="match status" value="1"/>
</dbReference>
<dbReference type="PANTHER" id="PTHR32315">
    <property type="entry name" value="ADENINE PHOSPHORIBOSYLTRANSFERASE"/>
    <property type="match status" value="1"/>
</dbReference>
<dbReference type="PANTHER" id="PTHR32315:SF3">
    <property type="entry name" value="ADENINE PHOSPHORIBOSYLTRANSFERASE"/>
    <property type="match status" value="1"/>
</dbReference>
<dbReference type="Pfam" id="PF00156">
    <property type="entry name" value="Pribosyltran"/>
    <property type="match status" value="1"/>
</dbReference>
<dbReference type="SUPFAM" id="SSF53271">
    <property type="entry name" value="PRTase-like"/>
    <property type="match status" value="1"/>
</dbReference>
<dbReference type="PROSITE" id="PS00103">
    <property type="entry name" value="PUR_PYR_PR_TRANSFER"/>
    <property type="match status" value="1"/>
</dbReference>
<gene>
    <name evidence="1" type="primary">apt</name>
    <name type="ordered locus">ECS88_0466</name>
</gene>
<proteinExistence type="inferred from homology"/>
<comment type="function">
    <text evidence="1">Catalyzes a salvage reaction resulting in the formation of AMP, that is energically less costly than de novo synthesis.</text>
</comment>
<comment type="catalytic activity">
    <reaction evidence="1">
        <text>AMP + diphosphate = 5-phospho-alpha-D-ribose 1-diphosphate + adenine</text>
        <dbReference type="Rhea" id="RHEA:16609"/>
        <dbReference type="ChEBI" id="CHEBI:16708"/>
        <dbReference type="ChEBI" id="CHEBI:33019"/>
        <dbReference type="ChEBI" id="CHEBI:58017"/>
        <dbReference type="ChEBI" id="CHEBI:456215"/>
        <dbReference type="EC" id="2.4.2.7"/>
    </reaction>
</comment>
<comment type="pathway">
    <text evidence="1">Purine metabolism; AMP biosynthesis via salvage pathway; AMP from adenine: step 1/1.</text>
</comment>
<comment type="subunit">
    <text evidence="1">Homodimer.</text>
</comment>
<comment type="subcellular location">
    <subcellularLocation>
        <location evidence="1">Cytoplasm</location>
    </subcellularLocation>
</comment>
<comment type="similarity">
    <text evidence="1">Belongs to the purine/pyrimidine phosphoribosyltransferase family.</text>
</comment>
<reference key="1">
    <citation type="journal article" date="2009" name="PLoS Genet.">
        <title>Organised genome dynamics in the Escherichia coli species results in highly diverse adaptive paths.</title>
        <authorList>
            <person name="Touchon M."/>
            <person name="Hoede C."/>
            <person name="Tenaillon O."/>
            <person name="Barbe V."/>
            <person name="Baeriswyl S."/>
            <person name="Bidet P."/>
            <person name="Bingen E."/>
            <person name="Bonacorsi S."/>
            <person name="Bouchier C."/>
            <person name="Bouvet O."/>
            <person name="Calteau A."/>
            <person name="Chiapello H."/>
            <person name="Clermont O."/>
            <person name="Cruveiller S."/>
            <person name="Danchin A."/>
            <person name="Diard M."/>
            <person name="Dossat C."/>
            <person name="Karoui M.E."/>
            <person name="Frapy E."/>
            <person name="Garry L."/>
            <person name="Ghigo J.M."/>
            <person name="Gilles A.M."/>
            <person name="Johnson J."/>
            <person name="Le Bouguenec C."/>
            <person name="Lescat M."/>
            <person name="Mangenot S."/>
            <person name="Martinez-Jehanne V."/>
            <person name="Matic I."/>
            <person name="Nassif X."/>
            <person name="Oztas S."/>
            <person name="Petit M.A."/>
            <person name="Pichon C."/>
            <person name="Rouy Z."/>
            <person name="Ruf C.S."/>
            <person name="Schneider D."/>
            <person name="Tourret J."/>
            <person name="Vacherie B."/>
            <person name="Vallenet D."/>
            <person name="Medigue C."/>
            <person name="Rocha E.P.C."/>
            <person name="Denamur E."/>
        </authorList>
    </citation>
    <scope>NUCLEOTIDE SEQUENCE [LARGE SCALE GENOMIC DNA]</scope>
    <source>
        <strain>S88 / ExPEC</strain>
    </source>
</reference>
<keyword id="KW-0963">Cytoplasm</keyword>
<keyword id="KW-0328">Glycosyltransferase</keyword>
<keyword id="KW-0660">Purine salvage</keyword>
<keyword id="KW-1185">Reference proteome</keyword>
<keyword id="KW-0808">Transferase</keyword>
<protein>
    <recommendedName>
        <fullName evidence="1">Adenine phosphoribosyltransferase</fullName>
        <shortName evidence="1">APRT</shortName>
        <ecNumber evidence="1">2.4.2.7</ecNumber>
    </recommendedName>
</protein>
<evidence type="ECO:0000255" key="1">
    <source>
        <dbReference type="HAMAP-Rule" id="MF_00004"/>
    </source>
</evidence>
<feature type="chain" id="PRO_1000116171" description="Adenine phosphoribosyltransferase">
    <location>
        <begin position="1"/>
        <end position="183"/>
    </location>
</feature>
<sequence>MTATAQQLEYLKNSIKSIQDYPKPGILFRDVTSLLEDPKAYALSIDLLVERYKNAGITKVVGTEARGFLFGAPVALGLGVGFVPVRKPGKLPRETISETYDLEYGTDQLEIHVDAIKPGDKVLVVDDLLATGGTIEATVKLIRRLGGEVADAAFIINLFDLGGEQRLEKQGITSYSLVPFPGH</sequence>